<evidence type="ECO:0000250" key="1">
    <source>
        <dbReference type="UniProtKB" id="Q6GQQ9"/>
    </source>
</evidence>
<evidence type="ECO:0000250" key="2">
    <source>
        <dbReference type="UniProtKB" id="Q9UGI0"/>
    </source>
</evidence>
<evidence type="ECO:0000255" key="3">
    <source>
        <dbReference type="PROSITE-ProRule" id="PRU00139"/>
    </source>
</evidence>
<evidence type="ECO:0000255" key="4">
    <source>
        <dbReference type="PROSITE-ProRule" id="PRU00322"/>
    </source>
</evidence>
<evidence type="ECO:0000256" key="5">
    <source>
        <dbReference type="SAM" id="MobiDB-lite"/>
    </source>
</evidence>
<evidence type="ECO:0000305" key="6"/>
<gene>
    <name type="primary">zranb1</name>
</gene>
<feature type="chain" id="PRO_0000361558" description="Ubiquitin thioesterase zranb1">
    <location>
        <begin position="1"/>
        <end position="701"/>
    </location>
</feature>
<feature type="repeat" description="ANK 1">
    <location>
        <begin position="253"/>
        <end position="283"/>
    </location>
</feature>
<feature type="repeat" description="ANK 2">
    <location>
        <begin position="306"/>
        <end position="333"/>
    </location>
</feature>
<feature type="domain" description="OTU" evidence="3">
    <location>
        <begin position="425"/>
        <end position="585"/>
    </location>
</feature>
<feature type="zinc finger region" description="RanBP2-type 1" evidence="4">
    <location>
        <begin position="3"/>
        <end position="33"/>
    </location>
</feature>
<feature type="zinc finger region" description="RanBP2-type 2" evidence="4">
    <location>
        <begin position="79"/>
        <end position="108"/>
    </location>
</feature>
<feature type="zinc finger region" description="RanBP2-type 3" evidence="4">
    <location>
        <begin position="143"/>
        <end position="173"/>
    </location>
</feature>
<feature type="region of interest" description="Disordered" evidence="5">
    <location>
        <begin position="38"/>
        <end position="59"/>
    </location>
</feature>
<feature type="region of interest" description="Disordered" evidence="5">
    <location>
        <begin position="108"/>
        <end position="129"/>
    </location>
</feature>
<feature type="region of interest" description="Disordered" evidence="5">
    <location>
        <begin position="198"/>
        <end position="220"/>
    </location>
</feature>
<feature type="compositionally biased region" description="Low complexity" evidence="5">
    <location>
        <begin position="111"/>
        <end position="121"/>
    </location>
</feature>
<feature type="compositionally biased region" description="Polar residues" evidence="5">
    <location>
        <begin position="202"/>
        <end position="214"/>
    </location>
</feature>
<feature type="active site" description="Nucleophile" evidence="2">
    <location>
        <position position="436"/>
    </location>
</feature>
<feature type="active site" description="Proton acceptor" evidence="1">
    <location>
        <position position="578"/>
    </location>
</feature>
<feature type="binding site" evidence="4">
    <location>
        <position position="10"/>
    </location>
    <ligand>
        <name>Zn(2+)</name>
        <dbReference type="ChEBI" id="CHEBI:29105"/>
        <label>1</label>
    </ligand>
</feature>
<feature type="binding site" evidence="4">
    <location>
        <position position="13"/>
    </location>
    <ligand>
        <name>Zn(2+)</name>
        <dbReference type="ChEBI" id="CHEBI:29105"/>
        <label>1</label>
    </ligand>
</feature>
<feature type="binding site" evidence="4">
    <location>
        <position position="24"/>
    </location>
    <ligand>
        <name>Zn(2+)</name>
        <dbReference type="ChEBI" id="CHEBI:29105"/>
        <label>1</label>
    </ligand>
</feature>
<feature type="binding site" evidence="4">
    <location>
        <position position="27"/>
    </location>
    <ligand>
        <name>Zn(2+)</name>
        <dbReference type="ChEBI" id="CHEBI:29105"/>
        <label>1</label>
    </ligand>
</feature>
<feature type="binding site" evidence="4">
    <location>
        <position position="85"/>
    </location>
    <ligand>
        <name>Zn(2+)</name>
        <dbReference type="ChEBI" id="CHEBI:29105"/>
        <label>2</label>
    </ligand>
</feature>
<feature type="binding site" evidence="4">
    <location>
        <position position="88"/>
    </location>
    <ligand>
        <name>Zn(2+)</name>
        <dbReference type="ChEBI" id="CHEBI:29105"/>
        <label>2</label>
    </ligand>
</feature>
<feature type="binding site" evidence="4">
    <location>
        <position position="99"/>
    </location>
    <ligand>
        <name>Zn(2+)</name>
        <dbReference type="ChEBI" id="CHEBI:29105"/>
        <label>2</label>
    </ligand>
</feature>
<feature type="binding site" evidence="4">
    <location>
        <position position="102"/>
    </location>
    <ligand>
        <name>Zn(2+)</name>
        <dbReference type="ChEBI" id="CHEBI:29105"/>
        <label>2</label>
    </ligand>
</feature>
<feature type="binding site" evidence="4">
    <location>
        <position position="150"/>
    </location>
    <ligand>
        <name>Zn(2+)</name>
        <dbReference type="ChEBI" id="CHEBI:29105"/>
        <label>3</label>
    </ligand>
</feature>
<feature type="binding site" evidence="4">
    <location>
        <position position="153"/>
    </location>
    <ligand>
        <name>Zn(2+)</name>
        <dbReference type="ChEBI" id="CHEBI:29105"/>
        <label>3</label>
    </ligand>
</feature>
<feature type="binding site" evidence="4">
    <location>
        <position position="164"/>
    </location>
    <ligand>
        <name>Zn(2+)</name>
        <dbReference type="ChEBI" id="CHEBI:29105"/>
        <label>3</label>
    </ligand>
</feature>
<feature type="binding site" evidence="4">
    <location>
        <position position="167"/>
    </location>
    <ligand>
        <name>Zn(2+)</name>
        <dbReference type="ChEBI" id="CHEBI:29105"/>
        <label>3</label>
    </ligand>
</feature>
<name>ZRAN1_XENTR</name>
<protein>
    <recommendedName>
        <fullName evidence="6">Ubiquitin thioesterase zranb1</fullName>
        <ecNumber evidence="2">3.4.19.12</ecNumber>
    </recommendedName>
    <alternativeName>
        <fullName>Zinc finger Ran-binding domain-containing protein 1</fullName>
    </alternativeName>
</protein>
<accession>B1H2Q2</accession>
<sequence length="701" mass="80037">MTEHGIKWACEYCTYENWPSAIKCTMCRAPRPSGAIITEEPFKNSTPDVGSMERESGSPLICPDSSARPRVKSSYSMETSTKWSCHMCTYLNWPRAIRCTQCLSQRRTRSPTESPQSSGSSLRAIPSPIDPCEEYNDRNKLNIKGQHWTCSACTYENCAKAKKCVVCDHPTPNNMDAIELANTDEASSIINEQDRARWRGGCSSSNSQRRSPPTSKRDSDMDFQRIELAGAVGSKEEFELDLKKLKQIKNRMRKTDWLFLNACVGVVEGDLSAVEAYKTSGGDIARQLSADEVRLLNRPSAFDVGYTLVHLSIRFQRQDMLAILLTEFSQHAAKCIPAMVCPELTEQIRREIAASVHQRKGDFACYFLTDLVTFTLPADIEDLPPTVQEKLFDEVLDRDVQKELEEESPIINWSLELGTRLDSRLYALWNRTAGDCLLDSVLQATWGIYDKDSVLRKALHDSLHDCSHWFYSRWKEWESWYSQSFGLHFSLREEQWQEDWAFILSLASQPGASLEQTHIFVLAHILRRPIIVYGVKYYKSFRGETLGYTRFQGVYLPLLWEQSFCWKSPIALGYTRGHFSALVAMENDGFDNRGAGANLNTDDDVTVTFLPLVDSERKLLHIHFLSAQELGNEDQQEKLLREWMDCCVTEGGVLVAMQKSSRRRNHPLVTQMVEKWLDGYRQIRPCTALSDGEEDEDDEDE</sequence>
<keyword id="KW-0040">ANK repeat</keyword>
<keyword id="KW-0963">Cytoplasm</keyword>
<keyword id="KW-0378">Hydrolase</keyword>
<keyword id="KW-0479">Metal-binding</keyword>
<keyword id="KW-0539">Nucleus</keyword>
<keyword id="KW-0645">Protease</keyword>
<keyword id="KW-1185">Reference proteome</keyword>
<keyword id="KW-0677">Repeat</keyword>
<keyword id="KW-0788">Thiol protease</keyword>
<keyword id="KW-0833">Ubl conjugation pathway</keyword>
<keyword id="KW-0879">Wnt signaling pathway</keyword>
<keyword id="KW-0862">Zinc</keyword>
<keyword id="KW-0863">Zinc-finger</keyword>
<proteinExistence type="evidence at transcript level"/>
<organism>
    <name type="scientific">Xenopus tropicalis</name>
    <name type="common">Western clawed frog</name>
    <name type="synonym">Silurana tropicalis</name>
    <dbReference type="NCBI Taxonomy" id="8364"/>
    <lineage>
        <taxon>Eukaryota</taxon>
        <taxon>Metazoa</taxon>
        <taxon>Chordata</taxon>
        <taxon>Craniata</taxon>
        <taxon>Vertebrata</taxon>
        <taxon>Euteleostomi</taxon>
        <taxon>Amphibia</taxon>
        <taxon>Batrachia</taxon>
        <taxon>Anura</taxon>
        <taxon>Pipoidea</taxon>
        <taxon>Pipidae</taxon>
        <taxon>Xenopodinae</taxon>
        <taxon>Xenopus</taxon>
        <taxon>Silurana</taxon>
    </lineage>
</organism>
<comment type="function">
    <text evidence="2">Ubiquitin thioesterase, which specifically hydrolyzes 'Lys-29'-linked and 'Lys-33'-linked diubiquitin (By similarity). Also cleaves 'Lys-63'-linked chains, but with 40-fold less efficiency compared to 'Lys-29'-linked ones (By similarity). Positive regulator of the Wnt signaling pathway that deubiquitinates apc protein, a negative regulator of Wnt-mediated transcription (By similarity). Acts as a regulator of autophagy by mediating deubiquitination of pik3c3/vps34, thereby promoting autophagosome maturation (By similarity). Plays a role in the regulation of cell morphology and cytoskeletal organization (By similarity). Required in the stress fiber dynamics and cell migration (By similarity).</text>
</comment>
<comment type="catalytic activity">
    <reaction evidence="2">
        <text>Thiol-dependent hydrolysis of ester, thioester, amide, peptide and isopeptide bonds formed by the C-terminal Gly of ubiquitin (a 76-residue protein attached to proteins as an intracellular targeting signal).</text>
        <dbReference type="EC" id="3.4.19.12"/>
    </reaction>
</comment>
<comment type="subcellular location">
    <subcellularLocation>
        <location evidence="2">Cytoplasm</location>
    </subcellularLocation>
    <subcellularLocation>
        <location evidence="2">Nucleus</location>
    </subcellularLocation>
    <text evidence="2">Enriched in punctate localization in the cytoplasm.</text>
</comment>
<comment type="domain">
    <text evidence="2">The RanBP2-type zinc fingers, also called NZFs, mediate the interaction with ubiquitin and determine linkage specificity. RanBP2-type zinc fingers 1 and 2 (also named NZF1 and NZF2) specifically recognize and bind 'Lys-29'- and 'Lys-33'-linked ubiquitin. RanBP2-type zinc finger 3 (also named NZF3) binds 'Lys-33'-linked ubiquitin and shows weak binding to 'Lys-6'-, 'Lys-48'- and 'Lys-63'-linked ubiquitin chains but it does not interact with 'Lys-29'-linked chains.</text>
</comment>
<comment type="domain">
    <text evidence="2">The OTU domain mediates the deubiquitinating activity.</text>
</comment>
<comment type="domain">
    <text evidence="2">The second ankyrin repeat ANK 2 is termed AnkUBD, it interacts with ubiquitin hydrophobic patch and contributes to linkage specificity.</text>
</comment>
<comment type="similarity">
    <text evidence="6">Belongs to the peptidase C64 family.</text>
</comment>
<reference key="1">
    <citation type="submission" date="2008-03" db="EMBL/GenBank/DDBJ databases">
        <authorList>
            <consortium name="NIH - Xenopus Gene Collection (XGC) project"/>
        </authorList>
    </citation>
    <scope>NUCLEOTIDE SEQUENCE [LARGE SCALE MRNA]</scope>
    <source>
        <tissue>Testis</tissue>
    </source>
</reference>
<dbReference type="EC" id="3.4.19.12" evidence="2"/>
<dbReference type="EMBL" id="BC161086">
    <property type="protein sequence ID" value="AAI61086.1"/>
    <property type="molecule type" value="mRNA"/>
</dbReference>
<dbReference type="RefSeq" id="NP_001116900.1">
    <property type="nucleotide sequence ID" value="NM_001123428.1"/>
</dbReference>
<dbReference type="SMR" id="B1H2Q2"/>
<dbReference type="FunCoup" id="B1H2Q2">
    <property type="interactions" value="1136"/>
</dbReference>
<dbReference type="STRING" id="8364.ENSXETP00000040428"/>
<dbReference type="MEROPS" id="C64.004"/>
<dbReference type="PaxDb" id="8364-ENSXETP00000050986"/>
<dbReference type="GeneID" id="100144659"/>
<dbReference type="KEGG" id="xtr:100144659"/>
<dbReference type="AGR" id="Xenbase:XB-GENE-876399"/>
<dbReference type="CTD" id="54764"/>
<dbReference type="Xenbase" id="XB-GENE-876399">
    <property type="gene designation" value="zranb1"/>
</dbReference>
<dbReference type="eggNOG" id="KOG4345">
    <property type="taxonomic scope" value="Eukaryota"/>
</dbReference>
<dbReference type="InParanoid" id="B1H2Q2"/>
<dbReference type="OrthoDB" id="6275030at2759"/>
<dbReference type="Reactome" id="R-XTR-195253">
    <property type="pathway name" value="Degradation of beta-catenin by the destruction complex"/>
</dbReference>
<dbReference type="Reactome" id="R-XTR-5689896">
    <property type="pathway name" value="Ovarian tumor domain proteases"/>
</dbReference>
<dbReference type="Proteomes" id="UP000008143">
    <property type="component" value="Chromosome 7"/>
</dbReference>
<dbReference type="GO" id="GO:0005737">
    <property type="term" value="C:cytoplasm"/>
    <property type="evidence" value="ECO:0000250"/>
    <property type="project" value="UniProtKB"/>
</dbReference>
<dbReference type="GO" id="GO:0005634">
    <property type="term" value="C:nucleus"/>
    <property type="evidence" value="ECO:0000250"/>
    <property type="project" value="UniProtKB"/>
</dbReference>
<dbReference type="GO" id="GO:0004843">
    <property type="term" value="F:cysteine-type deubiquitinase activity"/>
    <property type="evidence" value="ECO:0000250"/>
    <property type="project" value="UniProtKB"/>
</dbReference>
<dbReference type="GO" id="GO:0008270">
    <property type="term" value="F:zinc ion binding"/>
    <property type="evidence" value="ECO:0007669"/>
    <property type="project" value="UniProtKB-KW"/>
</dbReference>
<dbReference type="GO" id="GO:0016477">
    <property type="term" value="P:cell migration"/>
    <property type="evidence" value="ECO:0000250"/>
    <property type="project" value="UniProtKB"/>
</dbReference>
<dbReference type="GO" id="GO:0007010">
    <property type="term" value="P:cytoskeleton organization"/>
    <property type="evidence" value="ECO:0000250"/>
    <property type="project" value="UniProtKB"/>
</dbReference>
<dbReference type="GO" id="GO:0030177">
    <property type="term" value="P:positive regulation of Wnt signaling pathway"/>
    <property type="evidence" value="ECO:0000250"/>
    <property type="project" value="UniProtKB"/>
</dbReference>
<dbReference type="GO" id="GO:0035523">
    <property type="term" value="P:protein K29-linked deubiquitination"/>
    <property type="evidence" value="ECO:0000250"/>
    <property type="project" value="UniProtKB"/>
</dbReference>
<dbReference type="GO" id="GO:1990168">
    <property type="term" value="P:protein K33-linked deubiquitination"/>
    <property type="evidence" value="ECO:0000250"/>
    <property type="project" value="UniProtKB"/>
</dbReference>
<dbReference type="GO" id="GO:0070536">
    <property type="term" value="P:protein K63-linked deubiquitination"/>
    <property type="evidence" value="ECO:0000250"/>
    <property type="project" value="UniProtKB"/>
</dbReference>
<dbReference type="GO" id="GO:0006508">
    <property type="term" value="P:proteolysis"/>
    <property type="evidence" value="ECO:0007669"/>
    <property type="project" value="UniProtKB-KW"/>
</dbReference>
<dbReference type="GO" id="GO:0022604">
    <property type="term" value="P:regulation of cell morphogenesis"/>
    <property type="evidence" value="ECO:0000250"/>
    <property type="project" value="UniProtKB"/>
</dbReference>
<dbReference type="GO" id="GO:0016055">
    <property type="term" value="P:Wnt signaling pathway"/>
    <property type="evidence" value="ECO:0007669"/>
    <property type="project" value="UniProtKB-KW"/>
</dbReference>
<dbReference type="CDD" id="cd22767">
    <property type="entry name" value="OTU_ZRANB1"/>
    <property type="match status" value="1"/>
</dbReference>
<dbReference type="FunFam" id="1.25.40.560:FF:000001">
    <property type="entry name" value="ubiquitin thioesterase ZRANB1 isoform X1"/>
    <property type="match status" value="1"/>
</dbReference>
<dbReference type="FunFam" id="4.10.1060.10:FF:000006">
    <property type="entry name" value="ubiquitin thioesterase ZRANB1 isoform X1"/>
    <property type="match status" value="1"/>
</dbReference>
<dbReference type="FunFam" id="4.10.1060.10:FF:000011">
    <property type="entry name" value="ubiquitin thioesterase ZRANB1 isoform X1"/>
    <property type="match status" value="1"/>
</dbReference>
<dbReference type="FunFam" id="4.10.1060.10:FF:000012">
    <property type="entry name" value="ubiquitin thioesterase ZRANB1 isoform X1"/>
    <property type="match status" value="1"/>
</dbReference>
<dbReference type="Gene3D" id="1.25.40.560">
    <property type="match status" value="1"/>
</dbReference>
<dbReference type="Gene3D" id="4.10.1060.10">
    <property type="entry name" value="Zinc finger, RanBP2-type"/>
    <property type="match status" value="3"/>
</dbReference>
<dbReference type="InterPro" id="IPR041294">
    <property type="entry name" value="AnkUBD"/>
</dbReference>
<dbReference type="InterPro" id="IPR051346">
    <property type="entry name" value="OTU_Deubiquitinase"/>
</dbReference>
<dbReference type="InterPro" id="IPR003323">
    <property type="entry name" value="OTU_dom"/>
</dbReference>
<dbReference type="InterPro" id="IPR001876">
    <property type="entry name" value="Znf_RanBP2"/>
</dbReference>
<dbReference type="InterPro" id="IPR036443">
    <property type="entry name" value="Znf_RanBP2_sf"/>
</dbReference>
<dbReference type="InterPro" id="IPR049768">
    <property type="entry name" value="ZRANB1_OTU"/>
</dbReference>
<dbReference type="PANTHER" id="PTHR13367">
    <property type="entry name" value="UBIQUITIN THIOESTERASE"/>
    <property type="match status" value="1"/>
</dbReference>
<dbReference type="PANTHER" id="PTHR13367:SF28">
    <property type="entry name" value="UBIQUITIN THIOESTERASE ZRANB1"/>
    <property type="match status" value="1"/>
</dbReference>
<dbReference type="Pfam" id="PF18418">
    <property type="entry name" value="AnkUBD"/>
    <property type="match status" value="1"/>
</dbReference>
<dbReference type="Pfam" id="PF02338">
    <property type="entry name" value="OTU"/>
    <property type="match status" value="1"/>
</dbReference>
<dbReference type="Pfam" id="PF00641">
    <property type="entry name" value="Zn_ribbon_RanBP"/>
    <property type="match status" value="2"/>
</dbReference>
<dbReference type="SMART" id="SM00547">
    <property type="entry name" value="ZnF_RBZ"/>
    <property type="match status" value="3"/>
</dbReference>
<dbReference type="SUPFAM" id="SSF90209">
    <property type="entry name" value="Ran binding protein zinc finger-like"/>
    <property type="match status" value="2"/>
</dbReference>
<dbReference type="PROSITE" id="PS50802">
    <property type="entry name" value="OTU"/>
    <property type="match status" value="1"/>
</dbReference>
<dbReference type="PROSITE" id="PS01358">
    <property type="entry name" value="ZF_RANBP2_1"/>
    <property type="match status" value="3"/>
</dbReference>
<dbReference type="PROSITE" id="PS50199">
    <property type="entry name" value="ZF_RANBP2_2"/>
    <property type="match status" value="3"/>
</dbReference>